<accession>P19952</accession>
<accession>Q5UXW8</accession>
<gene>
    <name evidence="1" type="primary">rps19e</name>
    <name type="ordered locus">rrnAC3179</name>
</gene>
<organism>
    <name type="scientific">Haloarcula marismortui (strain ATCC 43049 / DSM 3752 / JCM 8966 / VKM B-1809)</name>
    <name type="common">Halobacterium marismortui</name>
    <dbReference type="NCBI Taxonomy" id="272569"/>
    <lineage>
        <taxon>Archaea</taxon>
        <taxon>Methanobacteriati</taxon>
        <taxon>Methanobacteriota</taxon>
        <taxon>Stenosarchaea group</taxon>
        <taxon>Halobacteria</taxon>
        <taxon>Halobacteriales</taxon>
        <taxon>Haloarculaceae</taxon>
        <taxon>Haloarcula</taxon>
    </lineage>
</organism>
<sequence>MATLYDVPPEELIEALTETLADEDDIEAPDWAEFTKTGVDRELPPEQEDFWTRRAASLLRKVAVDGPVGVNALRSEYGTSKQGTTRYRVRPHQKTKGSGNIIRTALQQLEDAGYVETSENDGRRVTGDGRSLLDDTAGDLLTELDRPELERYA</sequence>
<reference key="1">
    <citation type="journal article" date="2004" name="Genome Res.">
        <title>Genome sequence of Haloarcula marismortui: a halophilic archaeon from the Dead Sea.</title>
        <authorList>
            <person name="Baliga N.S."/>
            <person name="Bonneau R."/>
            <person name="Facciotti M.T."/>
            <person name="Pan M."/>
            <person name="Glusman G."/>
            <person name="Deutsch E.W."/>
            <person name="Shannon P."/>
            <person name="Chiu Y."/>
            <person name="Weng R.S."/>
            <person name="Gan R.R."/>
            <person name="Hung P."/>
            <person name="Date S.V."/>
            <person name="Marcotte E."/>
            <person name="Hood L."/>
            <person name="Ng W.V."/>
        </authorList>
    </citation>
    <scope>NUCLEOTIDE SEQUENCE [LARGE SCALE GENOMIC DNA]</scope>
    <source>
        <strain>ATCC 43049 / DSM 3752 / JCM 8966 / VKM B-1809</strain>
    </source>
</reference>
<reference key="2">
    <citation type="journal article" date="1987" name="FEBS Lett.">
        <title>Primary structures of three highly acidic ribosomal proteins S6, S12 and S15 from the archaebacterium Halobacterium marismortui.</title>
        <authorList>
            <person name="Kimura J."/>
            <person name="Arndt E."/>
            <person name="Kimura M."/>
        </authorList>
    </citation>
    <scope>PROTEIN SEQUENCE OF 2-153</scope>
    <scope>SUBUNIT</scope>
</reference>
<reference key="3">
    <citation type="journal article" date="1986" name="FEBS Lett.">
        <title>Purification and characterization of ribosomal proteins from the 30S subunit of the extreme halophile Halobacterium marismortui.</title>
        <authorList>
            <person name="Shoham M."/>
            <person name="Dijk J."/>
            <person name="Reinhardt R."/>
            <person name="Wittmann-Liebold B."/>
        </authorList>
    </citation>
    <scope>PROTEIN SEQUENCE OF 2-22</scope>
</reference>
<protein>
    <recommendedName>
        <fullName evidence="1">Small ribosomal subunit protein eS19</fullName>
    </recommendedName>
    <alternativeName>
        <fullName evidence="5">30S ribosomal protein S19e</fullName>
    </alternativeName>
    <alternativeName>
        <fullName>E1.3</fullName>
    </alternativeName>
    <alternativeName>
        <fullName>HS12</fullName>
    </alternativeName>
</protein>
<keyword id="KW-0903">Direct protein sequencing</keyword>
<keyword id="KW-1185">Reference proteome</keyword>
<keyword id="KW-0687">Ribonucleoprotein</keyword>
<keyword id="KW-0689">Ribosomal protein</keyword>
<name>RS19E_HALMA</name>
<evidence type="ECO:0000255" key="1">
    <source>
        <dbReference type="HAMAP-Rule" id="MF_01474"/>
    </source>
</evidence>
<evidence type="ECO:0000256" key="2">
    <source>
        <dbReference type="SAM" id="MobiDB-lite"/>
    </source>
</evidence>
<evidence type="ECO:0000269" key="3">
    <source>
    </source>
</evidence>
<evidence type="ECO:0000269" key="4">
    <source>
    </source>
</evidence>
<evidence type="ECO:0000305" key="5"/>
<comment type="function">
    <text evidence="1">May be involved in maturation of the 30S ribosomal subunit.</text>
</comment>
<comment type="subunit">
    <text evidence="1 4">Part of the 30S ribosomal subunit.</text>
</comment>
<comment type="similarity">
    <text evidence="1">Belongs to the eukaryotic ribosomal protein eS19 family.</text>
</comment>
<proteinExistence type="evidence at protein level"/>
<feature type="initiator methionine" description="Removed" evidence="3 4">
    <location>
        <position position="1"/>
    </location>
</feature>
<feature type="chain" id="PRO_0000153839" description="Small ribosomal subunit protein eS19">
    <location>
        <begin position="2"/>
        <end position="153"/>
    </location>
</feature>
<feature type="region of interest" description="Disordered" evidence="2">
    <location>
        <begin position="77"/>
        <end position="99"/>
    </location>
</feature>
<feature type="region of interest" description="Disordered" evidence="2">
    <location>
        <begin position="113"/>
        <end position="139"/>
    </location>
</feature>
<feature type="compositionally biased region" description="Basic and acidic residues" evidence="2">
    <location>
        <begin position="120"/>
        <end position="133"/>
    </location>
</feature>
<feature type="sequence conflict" description="In Ref. 3; AA sequence." evidence="5" ref="3">
    <original>I</original>
    <variation>E</variation>
    <location>
        <position position="13"/>
    </location>
</feature>
<feature type="sequence conflict" description="In Ref. 3; AA sequence." evidence="5" ref="3">
    <original>L</original>
    <variation>I</variation>
    <location>
        <position position="16"/>
    </location>
</feature>
<feature type="sequence conflict" description="In Ref. 3; AA sequence." evidence="5" ref="3">
    <original>L</original>
    <variation>I</variation>
    <location>
        <position position="20"/>
    </location>
</feature>
<feature type="sequence conflict" description="In Ref. 2; AA sequence." evidence="5" ref="2">
    <location>
        <begin position="24"/>
        <end position="29"/>
    </location>
</feature>
<feature type="sequence conflict" description="In Ref. 2; AA sequence." evidence="5" ref="2">
    <original>E</original>
    <variation>EE</variation>
    <location>
        <position position="148"/>
    </location>
</feature>
<dbReference type="EMBL" id="AY596297">
    <property type="protein sequence ID" value="AAV47885.1"/>
    <property type="molecule type" value="Genomic_DNA"/>
</dbReference>
<dbReference type="PIR" id="S00183">
    <property type="entry name" value="R3HS12"/>
</dbReference>
<dbReference type="RefSeq" id="WP_004964492.1">
    <property type="nucleotide sequence ID" value="NZ_CP039138.1"/>
</dbReference>
<dbReference type="SMR" id="P19952"/>
<dbReference type="STRING" id="272569.rrnAC3179"/>
<dbReference type="PaxDb" id="272569-rrnAC3179"/>
<dbReference type="EnsemblBacteria" id="AAV47885">
    <property type="protein sequence ID" value="AAV47885"/>
    <property type="gene ID" value="rrnAC3179"/>
</dbReference>
<dbReference type="KEGG" id="hma:rrnAC3179"/>
<dbReference type="PATRIC" id="fig|272569.17.peg.3719"/>
<dbReference type="eggNOG" id="arCOG01344">
    <property type="taxonomic scope" value="Archaea"/>
</dbReference>
<dbReference type="HOGENOM" id="CLU_108559_1_0_2"/>
<dbReference type="Proteomes" id="UP000001169">
    <property type="component" value="Chromosome I"/>
</dbReference>
<dbReference type="GO" id="GO:0022627">
    <property type="term" value="C:cytosolic small ribosomal subunit"/>
    <property type="evidence" value="ECO:0007669"/>
    <property type="project" value="TreeGrafter"/>
</dbReference>
<dbReference type="GO" id="GO:0003723">
    <property type="term" value="F:RNA binding"/>
    <property type="evidence" value="ECO:0007669"/>
    <property type="project" value="TreeGrafter"/>
</dbReference>
<dbReference type="GO" id="GO:0003735">
    <property type="term" value="F:structural constituent of ribosome"/>
    <property type="evidence" value="ECO:0007669"/>
    <property type="project" value="InterPro"/>
</dbReference>
<dbReference type="GO" id="GO:0000028">
    <property type="term" value="P:ribosomal small subunit assembly"/>
    <property type="evidence" value="ECO:0007669"/>
    <property type="project" value="TreeGrafter"/>
</dbReference>
<dbReference type="GO" id="GO:0006412">
    <property type="term" value="P:translation"/>
    <property type="evidence" value="ECO:0007669"/>
    <property type="project" value="UniProtKB-UniRule"/>
</dbReference>
<dbReference type="FunFam" id="1.10.10.10:FF:000449">
    <property type="entry name" value="30S ribosomal protein S19e"/>
    <property type="match status" value="1"/>
</dbReference>
<dbReference type="Gene3D" id="1.10.10.10">
    <property type="entry name" value="Winged helix-like DNA-binding domain superfamily/Winged helix DNA-binding domain"/>
    <property type="match status" value="1"/>
</dbReference>
<dbReference type="HAMAP" id="MF_01474">
    <property type="entry name" value="Ribosomal_eS19"/>
    <property type="match status" value="1"/>
</dbReference>
<dbReference type="InterPro" id="IPR001266">
    <property type="entry name" value="Ribosomal_eS19"/>
</dbReference>
<dbReference type="InterPro" id="IPR027548">
    <property type="entry name" value="Ribosomal_eS19_archaeal"/>
</dbReference>
<dbReference type="InterPro" id="IPR018277">
    <property type="entry name" value="Ribosomal_eS19_CS"/>
</dbReference>
<dbReference type="InterPro" id="IPR036388">
    <property type="entry name" value="WH-like_DNA-bd_sf"/>
</dbReference>
<dbReference type="InterPro" id="IPR036390">
    <property type="entry name" value="WH_DNA-bd_sf"/>
</dbReference>
<dbReference type="NCBIfam" id="NF006811">
    <property type="entry name" value="PRK09333.1"/>
    <property type="match status" value="1"/>
</dbReference>
<dbReference type="PANTHER" id="PTHR11710">
    <property type="entry name" value="40S RIBOSOMAL PROTEIN S19"/>
    <property type="match status" value="1"/>
</dbReference>
<dbReference type="PANTHER" id="PTHR11710:SF0">
    <property type="entry name" value="40S RIBOSOMAL PROTEIN S19"/>
    <property type="match status" value="1"/>
</dbReference>
<dbReference type="Pfam" id="PF01090">
    <property type="entry name" value="Ribosomal_S19e"/>
    <property type="match status" value="1"/>
</dbReference>
<dbReference type="SMART" id="SM01413">
    <property type="entry name" value="Ribosomal_S19e"/>
    <property type="match status" value="1"/>
</dbReference>
<dbReference type="SUPFAM" id="SSF46785">
    <property type="entry name" value="Winged helix' DNA-binding domain"/>
    <property type="match status" value="1"/>
</dbReference>
<dbReference type="PROSITE" id="PS00628">
    <property type="entry name" value="RIBOSOMAL_S19E"/>
    <property type="match status" value="1"/>
</dbReference>